<evidence type="ECO:0000250" key="1"/>
<evidence type="ECO:0000255" key="2"/>
<evidence type="ECO:0000256" key="3">
    <source>
        <dbReference type="SAM" id="MobiDB-lite"/>
    </source>
</evidence>
<evidence type="ECO:0000305" key="4"/>
<feature type="signal peptide" evidence="2">
    <location>
        <begin position="1"/>
        <end position="25"/>
    </location>
</feature>
<feature type="chain" id="PRO_0000030931" description="Ribonuclease pancreatic">
    <location>
        <begin position="26"/>
        <end position="149"/>
    </location>
</feature>
<feature type="region of interest" description="Disordered" evidence="3">
    <location>
        <begin position="30"/>
        <end position="49"/>
    </location>
</feature>
<feature type="active site" description="Proton acceptor" evidence="1">
    <location>
        <position position="37"/>
    </location>
</feature>
<feature type="active site" description="Proton donor" evidence="1">
    <location>
        <position position="144"/>
    </location>
</feature>
<feature type="binding site" evidence="1">
    <location>
        <position position="32"/>
    </location>
    <ligand>
        <name>substrate</name>
    </ligand>
</feature>
<feature type="binding site" evidence="1">
    <location>
        <position position="35"/>
    </location>
    <ligand>
        <name>substrate</name>
    </ligand>
</feature>
<feature type="binding site" evidence="1">
    <location>
        <begin position="66"/>
        <end position="70"/>
    </location>
    <ligand>
        <name>substrate</name>
    </ligand>
</feature>
<feature type="binding site" evidence="1">
    <location>
        <position position="91"/>
    </location>
    <ligand>
        <name>substrate</name>
    </ligand>
</feature>
<feature type="glycosylation site" description="N-linked (GlcNAc...) asparagine" evidence="2">
    <location>
        <position position="87"/>
    </location>
</feature>
<feature type="disulfide bond" evidence="1">
    <location>
        <begin position="51"/>
        <end position="109"/>
    </location>
</feature>
<feature type="disulfide bond" evidence="1">
    <location>
        <begin position="65"/>
        <end position="120"/>
    </location>
</feature>
<feature type="disulfide bond" evidence="1">
    <location>
        <begin position="83"/>
        <end position="135"/>
    </location>
</feature>
<feature type="disulfide bond" evidence="1">
    <location>
        <begin position="90"/>
        <end position="97"/>
    </location>
</feature>
<dbReference type="EC" id="4.6.1.18"/>
<dbReference type="EMBL" id="AJ238700">
    <property type="protein sequence ID" value="CAB60003.1"/>
    <property type="molecule type" value="Genomic_DNA"/>
</dbReference>
<dbReference type="SMR" id="Q9QYX2"/>
<dbReference type="GlyCosmos" id="Q9QYX2">
    <property type="glycosylation" value="1 site, No reported glycans"/>
</dbReference>
<dbReference type="GO" id="GO:0005576">
    <property type="term" value="C:extracellular region"/>
    <property type="evidence" value="ECO:0007669"/>
    <property type="project" value="UniProtKB-SubCell"/>
</dbReference>
<dbReference type="GO" id="GO:0016829">
    <property type="term" value="F:lyase activity"/>
    <property type="evidence" value="ECO:0007669"/>
    <property type="project" value="UniProtKB-KW"/>
</dbReference>
<dbReference type="GO" id="GO:0003676">
    <property type="term" value="F:nucleic acid binding"/>
    <property type="evidence" value="ECO:0007669"/>
    <property type="project" value="InterPro"/>
</dbReference>
<dbReference type="GO" id="GO:0004522">
    <property type="term" value="F:ribonuclease A activity"/>
    <property type="evidence" value="ECO:0007669"/>
    <property type="project" value="UniProtKB-EC"/>
</dbReference>
<dbReference type="GO" id="GO:0050830">
    <property type="term" value="P:defense response to Gram-positive bacterium"/>
    <property type="evidence" value="ECO:0007669"/>
    <property type="project" value="TreeGrafter"/>
</dbReference>
<dbReference type="CDD" id="cd06265">
    <property type="entry name" value="RNase_A_canonical"/>
    <property type="match status" value="1"/>
</dbReference>
<dbReference type="FunFam" id="3.10.130.10:FF:000001">
    <property type="entry name" value="Ribonuclease pancreatic"/>
    <property type="match status" value="1"/>
</dbReference>
<dbReference type="Gene3D" id="3.10.130.10">
    <property type="entry name" value="Ribonuclease A-like domain"/>
    <property type="match status" value="1"/>
</dbReference>
<dbReference type="InterPro" id="IPR001427">
    <property type="entry name" value="RNaseA"/>
</dbReference>
<dbReference type="InterPro" id="IPR036816">
    <property type="entry name" value="RNaseA-like_dom_sf"/>
</dbReference>
<dbReference type="InterPro" id="IPR023411">
    <property type="entry name" value="RNaseA_AS"/>
</dbReference>
<dbReference type="InterPro" id="IPR023412">
    <property type="entry name" value="RNaseA_domain"/>
</dbReference>
<dbReference type="PANTHER" id="PTHR11437">
    <property type="entry name" value="RIBONUCLEASE"/>
    <property type="match status" value="1"/>
</dbReference>
<dbReference type="PANTHER" id="PTHR11437:SF24">
    <property type="entry name" value="RIBONUCLEASE PANCREATIC"/>
    <property type="match status" value="1"/>
</dbReference>
<dbReference type="Pfam" id="PF00074">
    <property type="entry name" value="RnaseA"/>
    <property type="match status" value="1"/>
</dbReference>
<dbReference type="PRINTS" id="PR00794">
    <property type="entry name" value="RIBONUCLEASE"/>
</dbReference>
<dbReference type="SMART" id="SM00092">
    <property type="entry name" value="RNAse_Pc"/>
    <property type="match status" value="1"/>
</dbReference>
<dbReference type="SUPFAM" id="SSF54076">
    <property type="entry name" value="RNase A-like"/>
    <property type="match status" value="1"/>
</dbReference>
<dbReference type="PROSITE" id="PS00127">
    <property type="entry name" value="RNASE_PANCREATIC"/>
    <property type="match status" value="1"/>
</dbReference>
<reference key="1">
    <citation type="journal article" date="1999" name="Mol. Phylogenet. Evol.">
        <title>The phylogenetic position of 'Acomyinae' (Rodentia, Mammalia) as sister group of a Murinae + Gerbillinae clade: evidence from the nuclear ribonuclease gene.</title>
        <authorList>
            <person name="Dubois J.-Y.F."/>
            <person name="Catzeflis F.M."/>
            <person name="Beintema J.J."/>
        </authorList>
    </citation>
    <scope>NUCLEOTIDE SEQUENCE [GENOMIC DNA]</scope>
</reference>
<keyword id="KW-1015">Disulfide bond</keyword>
<keyword id="KW-0255">Endonuclease</keyword>
<keyword id="KW-0325">Glycoprotein</keyword>
<keyword id="KW-0378">Hydrolase</keyword>
<keyword id="KW-0456">Lyase</keyword>
<keyword id="KW-0540">Nuclease</keyword>
<keyword id="KW-0964">Secreted</keyword>
<keyword id="KW-0732">Signal</keyword>
<organism>
    <name type="scientific">Mus saxicola</name>
    <name type="common">Brown spiny mouse</name>
    <name type="synonym">Rock-loving mouse</name>
    <dbReference type="NCBI Taxonomy" id="10094"/>
    <lineage>
        <taxon>Eukaryota</taxon>
        <taxon>Metazoa</taxon>
        <taxon>Chordata</taxon>
        <taxon>Craniata</taxon>
        <taxon>Vertebrata</taxon>
        <taxon>Euteleostomi</taxon>
        <taxon>Mammalia</taxon>
        <taxon>Eutheria</taxon>
        <taxon>Euarchontoglires</taxon>
        <taxon>Glires</taxon>
        <taxon>Rodentia</taxon>
        <taxon>Myomorpha</taxon>
        <taxon>Muroidea</taxon>
        <taxon>Muridae</taxon>
        <taxon>Murinae</taxon>
        <taxon>Mus</taxon>
        <taxon>Pyromys</taxon>
    </lineage>
</organism>
<gene>
    <name type="primary">Rnase1</name>
</gene>
<sequence>MGLEKSLMLFPLFVLLLGWVQPSLGRESSAQKFQRQHMDPAGSSSNSPTYCNQMMKRRDMTKGSCKPVNTFVHEPLADVQAICSQENVTCKNGKSNCYKSSSALHITDCHLKGNSKYPNCDYKTSQYQKQIIVACEGNPYVPVHFDATV</sequence>
<proteinExistence type="evidence at transcript level"/>
<name>RNAS1_MUSSA</name>
<protein>
    <recommendedName>
        <fullName>Ribonuclease pancreatic</fullName>
        <ecNumber>4.6.1.18</ecNumber>
    </recommendedName>
    <alternativeName>
        <fullName>RNase 1</fullName>
    </alternativeName>
    <alternativeName>
        <fullName>RNase A</fullName>
    </alternativeName>
</protein>
<comment type="function">
    <text evidence="1">Endonuclease that catalyzes the cleavage of RNA on the 3' side of pyrimidine nucleotides. Acts on single-stranded and double-stranded RNA (By similarity).</text>
</comment>
<comment type="catalytic activity">
    <reaction>
        <text>an [RNA] containing cytidine + H2O = an [RNA]-3'-cytidine-3'-phosphate + a 5'-hydroxy-ribonucleotide-3'-[RNA].</text>
        <dbReference type="EC" id="4.6.1.18"/>
    </reaction>
</comment>
<comment type="catalytic activity">
    <reaction>
        <text>an [RNA] containing uridine + H2O = an [RNA]-3'-uridine-3'-phosphate + a 5'-hydroxy-ribonucleotide-3'-[RNA].</text>
        <dbReference type="EC" id="4.6.1.18"/>
    </reaction>
</comment>
<comment type="subunit">
    <text evidence="1">Monomer. Interacts with and forms tight 1:1 complexes with RNH1. Dimerization of two such complexes may occur. Interaction with RNH1 inhibits this protein (By similarity).</text>
</comment>
<comment type="subcellular location">
    <subcellularLocation>
        <location>Secreted</location>
    </subcellularLocation>
</comment>
<comment type="tissue specificity">
    <text>Pancreas.</text>
</comment>
<comment type="similarity">
    <text evidence="4">Belongs to the pancreatic ribonuclease family.</text>
</comment>
<accession>Q9QYX2</accession>